<comment type="function">
    <text evidence="1">May participate in lipoprotein metabolism.</text>
</comment>
<comment type="subcellular location">
    <subcellularLocation>
        <location evidence="1">Secreted</location>
    </subcellularLocation>
</comment>
<comment type="similarity">
    <text evidence="3">Belongs to the apolipoprotein C4 family.</text>
</comment>
<reference key="1">
    <citation type="submission" date="2018-02" db="EMBL/GenBank/DDBJ databases">
        <title>The 200 mammals project: sequencing genomes by a novel cost-effective method, yielding a high resolution annotation of the human genome.</title>
        <authorList>
            <person name="Johnson J."/>
            <person name="Muren E."/>
            <person name="Swofford R."/>
            <person name="Turner-Maier J."/>
            <person name="Marinescu V.D."/>
            <person name="Genereux D.P."/>
            <person name="Alfoldi J."/>
            <person name="Birren B."/>
            <person name="Karlsson E.K."/>
            <person name="Lindblad-Toh K."/>
        </authorList>
    </citation>
    <scope>NUCLEOTIDE SEQUENCE [LARGE SCALE GENOMIC DNA]</scope>
</reference>
<reference key="2">
    <citation type="unpublished observations" date="2021-03">
        <authorList>
            <person name="Puppione D.L."/>
        </authorList>
    </citation>
    <scope>IDENTIFICATION</scope>
</reference>
<organism>
    <name type="scientific">Tapirus indicus</name>
    <name type="common">Asiatic tapir</name>
    <name type="synonym">Malayan tapir</name>
    <dbReference type="NCBI Taxonomy" id="9802"/>
    <lineage>
        <taxon>Eukaryota</taxon>
        <taxon>Metazoa</taxon>
        <taxon>Chordata</taxon>
        <taxon>Craniata</taxon>
        <taxon>Vertebrata</taxon>
        <taxon>Euteleostomi</taxon>
        <taxon>Mammalia</taxon>
        <taxon>Eutheria</taxon>
        <taxon>Laurasiatheria</taxon>
        <taxon>Perissodactyla</taxon>
        <taxon>Tapiridae</taxon>
        <taxon>Tapirus</taxon>
    </lineage>
</organism>
<proteinExistence type="inferred from homology"/>
<dbReference type="EMBL" id="PVIE01006448">
    <property type="status" value="NOT_ANNOTATED_CDS"/>
    <property type="molecule type" value="Genomic_DNA"/>
</dbReference>
<dbReference type="GO" id="GO:0034364">
    <property type="term" value="C:high-density lipoprotein particle"/>
    <property type="evidence" value="ECO:0007669"/>
    <property type="project" value="TreeGrafter"/>
</dbReference>
<dbReference type="GO" id="GO:0034361">
    <property type="term" value="C:very-low-density lipoprotein particle"/>
    <property type="evidence" value="ECO:0007669"/>
    <property type="project" value="TreeGrafter"/>
</dbReference>
<dbReference type="GO" id="GO:0006869">
    <property type="term" value="P:lipid transport"/>
    <property type="evidence" value="ECO:0007669"/>
    <property type="project" value="UniProtKB-KW"/>
</dbReference>
<dbReference type="GO" id="GO:0010890">
    <property type="term" value="P:positive regulation of triglyceride storage"/>
    <property type="evidence" value="ECO:0007669"/>
    <property type="project" value="TreeGrafter"/>
</dbReference>
<dbReference type="GO" id="GO:0070328">
    <property type="term" value="P:triglyceride homeostasis"/>
    <property type="evidence" value="ECO:0007669"/>
    <property type="project" value="TreeGrafter"/>
</dbReference>
<dbReference type="InterPro" id="IPR028120">
    <property type="entry name" value="APOC4"/>
</dbReference>
<dbReference type="PANTHER" id="PTHR32288">
    <property type="entry name" value="APOLIPOPROTEIN C-IV"/>
    <property type="match status" value="1"/>
</dbReference>
<dbReference type="PANTHER" id="PTHR32288:SF0">
    <property type="entry name" value="APOLIPOPROTEIN C-IV"/>
    <property type="match status" value="1"/>
</dbReference>
<dbReference type="Pfam" id="PF15119">
    <property type="entry name" value="APOC4"/>
    <property type="match status" value="1"/>
</dbReference>
<sequence>MSLPGRRASSLPSLCFCVLVLAWAVACQQEVPAGSPSPPPEPASSPWGLVRSKVKEFLEPLVTKTRERWQWFWDPGAFQGFVQTYYDDHLRGLGPRARAWLHSSKDSLLSKAYNLCPQLLCGDRDQG</sequence>
<name>APOC4_TAPIN</name>
<keyword id="KW-0445">Lipid transport</keyword>
<keyword id="KW-0964">Secreted</keyword>
<keyword id="KW-0732">Signal</keyword>
<keyword id="KW-0813">Transport</keyword>
<gene>
    <name type="primary">APOC4</name>
</gene>
<feature type="signal peptide" evidence="2">
    <location>
        <begin position="1"/>
        <end position="27"/>
    </location>
</feature>
<feature type="chain" id="PRO_0000452908" description="Apolipoprotein C-IV">
    <location>
        <begin position="28"/>
        <end position="127"/>
    </location>
</feature>
<accession>P0DUP5</accession>
<evidence type="ECO:0000250" key="1"/>
<evidence type="ECO:0000255" key="2"/>
<evidence type="ECO:0000305" key="3"/>
<protein>
    <recommendedName>
        <fullName>Apolipoprotein C-IV</fullName>
        <shortName>Apo-CIV</shortName>
        <shortName>ApoC-IV</shortName>
    </recommendedName>
    <alternativeName>
        <fullName>Apolipoprotein C4</fullName>
    </alternativeName>
</protein>